<comment type="function">
    <text evidence="1">Endonuclease IV plays a role in DNA repair. It cleaves phosphodiester bonds at apurinic or apyrimidinic (AP) sites, generating a 3'-hydroxyl group and a 5'-terminal sugar phosphate.</text>
</comment>
<comment type="catalytic activity">
    <reaction evidence="1">
        <text>Endonucleolytic cleavage to 5'-phosphooligonucleotide end-products.</text>
        <dbReference type="EC" id="3.1.21.2"/>
    </reaction>
</comment>
<comment type="cofactor">
    <cofactor evidence="1">
        <name>Zn(2+)</name>
        <dbReference type="ChEBI" id="CHEBI:29105"/>
    </cofactor>
    <text evidence="1">Binds 3 Zn(2+) ions.</text>
</comment>
<comment type="similarity">
    <text evidence="1">Belongs to the AP endonuclease 2 family.</text>
</comment>
<proteinExistence type="inferred from homology"/>
<sequence length="296" mass="33075">MNDYLGAHMSIAGGIHKAPARGNRVGCGVIQVFTQNSNQWRGKMPTEGEAALFREQWEAAGLHEIIAHDIYLINLAAPPGETRDKSLAAFREEMERCTRLGIGTIVMHPGAHLGDGEETGIRRICEAFNRLIPAVPEFTGVILLETTAGQGTSLGHTFEQLAAIIAGTAFPDRFAVCFDTCHTFAAGYDFTTGEGYRRVFAEFDRLIGLDRLRCFHLNDSRKGLNSRVDRHEHIGRGTLGLEPFRFLMNDDRFTTVPKILETPKGDDDEFDIMNLNTLRRLVRRRTTKERTEPCPS</sequence>
<keyword id="KW-0227">DNA damage</keyword>
<keyword id="KW-0234">DNA repair</keyword>
<keyword id="KW-0255">Endonuclease</keyword>
<keyword id="KW-0378">Hydrolase</keyword>
<keyword id="KW-0479">Metal-binding</keyword>
<keyword id="KW-0540">Nuclease</keyword>
<keyword id="KW-1185">Reference proteome</keyword>
<keyword id="KW-0862">Zinc</keyword>
<feature type="chain" id="PRO_0000190843" description="Probable endonuclease 4">
    <location>
        <begin position="1"/>
        <end position="296"/>
    </location>
</feature>
<feature type="binding site" evidence="1">
    <location>
        <position position="68"/>
    </location>
    <ligand>
        <name>Zn(2+)</name>
        <dbReference type="ChEBI" id="CHEBI:29105"/>
        <label>1</label>
    </ligand>
</feature>
<feature type="binding site" evidence="1">
    <location>
        <position position="108"/>
    </location>
    <ligand>
        <name>Zn(2+)</name>
        <dbReference type="ChEBI" id="CHEBI:29105"/>
        <label>1</label>
    </ligand>
</feature>
<feature type="binding site" evidence="1">
    <location>
        <position position="145"/>
    </location>
    <ligand>
        <name>Zn(2+)</name>
        <dbReference type="ChEBI" id="CHEBI:29105"/>
        <label>1</label>
    </ligand>
</feature>
<feature type="binding site" evidence="1">
    <location>
        <position position="145"/>
    </location>
    <ligand>
        <name>Zn(2+)</name>
        <dbReference type="ChEBI" id="CHEBI:29105"/>
        <label>2</label>
    </ligand>
</feature>
<feature type="binding site" evidence="1">
    <location>
        <position position="179"/>
    </location>
    <ligand>
        <name>Zn(2+)</name>
        <dbReference type="ChEBI" id="CHEBI:29105"/>
        <label>2</label>
    </ligand>
</feature>
<feature type="binding site" evidence="1">
    <location>
        <position position="182"/>
    </location>
    <ligand>
        <name>Zn(2+)</name>
        <dbReference type="ChEBI" id="CHEBI:29105"/>
        <label>3</label>
    </ligand>
</feature>
<feature type="binding site" evidence="1">
    <location>
        <position position="216"/>
    </location>
    <ligand>
        <name>Zn(2+)</name>
        <dbReference type="ChEBI" id="CHEBI:29105"/>
        <label>2</label>
    </ligand>
</feature>
<feature type="binding site" evidence="1">
    <location>
        <position position="229"/>
    </location>
    <ligand>
        <name>Zn(2+)</name>
        <dbReference type="ChEBI" id="CHEBI:29105"/>
        <label>3</label>
    </ligand>
</feature>
<feature type="binding site" evidence="1">
    <location>
        <position position="231"/>
    </location>
    <ligand>
        <name>Zn(2+)</name>
        <dbReference type="ChEBI" id="CHEBI:29105"/>
        <label>3</label>
    </ligand>
</feature>
<feature type="binding site" evidence="1">
    <location>
        <position position="261"/>
    </location>
    <ligand>
        <name>Zn(2+)</name>
        <dbReference type="ChEBI" id="CHEBI:29105"/>
        <label>2</label>
    </ligand>
</feature>
<accession>Q74FS7</accession>
<name>END4_GEOSL</name>
<dbReference type="EC" id="3.1.21.2" evidence="1"/>
<dbReference type="EMBL" id="AE017180">
    <property type="protein sequence ID" value="AAR33860.1"/>
    <property type="molecule type" value="Genomic_DNA"/>
</dbReference>
<dbReference type="RefSeq" id="NP_951587.1">
    <property type="nucleotide sequence ID" value="NC_002939.5"/>
</dbReference>
<dbReference type="RefSeq" id="WP_010941197.1">
    <property type="nucleotide sequence ID" value="NC_002939.5"/>
</dbReference>
<dbReference type="SMR" id="Q74FS7"/>
<dbReference type="FunCoup" id="Q74FS7">
    <property type="interactions" value="290"/>
</dbReference>
<dbReference type="STRING" id="243231.GSU0529"/>
<dbReference type="EnsemblBacteria" id="AAR33860">
    <property type="protein sequence ID" value="AAR33860"/>
    <property type="gene ID" value="GSU0529"/>
</dbReference>
<dbReference type="KEGG" id="gsu:GSU0529"/>
<dbReference type="PATRIC" id="fig|243231.5.peg.530"/>
<dbReference type="eggNOG" id="COG0648">
    <property type="taxonomic scope" value="Bacteria"/>
</dbReference>
<dbReference type="HOGENOM" id="CLU_025885_0_1_7"/>
<dbReference type="InParanoid" id="Q74FS7"/>
<dbReference type="OrthoDB" id="9805666at2"/>
<dbReference type="Proteomes" id="UP000000577">
    <property type="component" value="Chromosome"/>
</dbReference>
<dbReference type="GO" id="GO:0008833">
    <property type="term" value="F:deoxyribonuclease IV (phage-T4-induced) activity"/>
    <property type="evidence" value="ECO:0007669"/>
    <property type="project" value="UniProtKB-UniRule"/>
</dbReference>
<dbReference type="GO" id="GO:0003677">
    <property type="term" value="F:DNA binding"/>
    <property type="evidence" value="ECO:0007669"/>
    <property type="project" value="InterPro"/>
</dbReference>
<dbReference type="GO" id="GO:0003906">
    <property type="term" value="F:DNA-(apurinic or apyrimidinic site) endonuclease activity"/>
    <property type="evidence" value="ECO:0000318"/>
    <property type="project" value="GO_Central"/>
</dbReference>
<dbReference type="GO" id="GO:0008081">
    <property type="term" value="F:phosphoric diester hydrolase activity"/>
    <property type="evidence" value="ECO:0000318"/>
    <property type="project" value="GO_Central"/>
</dbReference>
<dbReference type="GO" id="GO:0008270">
    <property type="term" value="F:zinc ion binding"/>
    <property type="evidence" value="ECO:0007669"/>
    <property type="project" value="UniProtKB-UniRule"/>
</dbReference>
<dbReference type="GO" id="GO:0006284">
    <property type="term" value="P:base-excision repair"/>
    <property type="evidence" value="ECO:0000318"/>
    <property type="project" value="GO_Central"/>
</dbReference>
<dbReference type="CDD" id="cd00019">
    <property type="entry name" value="AP2Ec"/>
    <property type="match status" value="1"/>
</dbReference>
<dbReference type="FunFam" id="3.20.20.150:FF:000001">
    <property type="entry name" value="Probable endonuclease 4"/>
    <property type="match status" value="1"/>
</dbReference>
<dbReference type="Gene3D" id="3.20.20.150">
    <property type="entry name" value="Divalent-metal-dependent TIM barrel enzymes"/>
    <property type="match status" value="1"/>
</dbReference>
<dbReference type="HAMAP" id="MF_00152">
    <property type="entry name" value="Nfo"/>
    <property type="match status" value="1"/>
</dbReference>
<dbReference type="InterPro" id="IPR001719">
    <property type="entry name" value="AP_endonuc_2"/>
</dbReference>
<dbReference type="InterPro" id="IPR018246">
    <property type="entry name" value="AP_endonuc_F2_Zn_BS"/>
</dbReference>
<dbReference type="InterPro" id="IPR036237">
    <property type="entry name" value="Xyl_isomerase-like_sf"/>
</dbReference>
<dbReference type="InterPro" id="IPR013022">
    <property type="entry name" value="Xyl_isomerase-like_TIM-brl"/>
</dbReference>
<dbReference type="NCBIfam" id="TIGR00587">
    <property type="entry name" value="nfo"/>
    <property type="match status" value="1"/>
</dbReference>
<dbReference type="PANTHER" id="PTHR21445:SF0">
    <property type="entry name" value="APURINIC-APYRIMIDINIC ENDONUCLEASE"/>
    <property type="match status" value="1"/>
</dbReference>
<dbReference type="PANTHER" id="PTHR21445">
    <property type="entry name" value="ENDONUCLEASE IV ENDODEOXYRIBONUCLEASE IV"/>
    <property type="match status" value="1"/>
</dbReference>
<dbReference type="Pfam" id="PF01261">
    <property type="entry name" value="AP_endonuc_2"/>
    <property type="match status" value="1"/>
</dbReference>
<dbReference type="SMART" id="SM00518">
    <property type="entry name" value="AP2Ec"/>
    <property type="match status" value="1"/>
</dbReference>
<dbReference type="SUPFAM" id="SSF51658">
    <property type="entry name" value="Xylose isomerase-like"/>
    <property type="match status" value="1"/>
</dbReference>
<dbReference type="PROSITE" id="PS00729">
    <property type="entry name" value="AP_NUCLEASE_F2_1"/>
    <property type="match status" value="1"/>
</dbReference>
<dbReference type="PROSITE" id="PS00730">
    <property type="entry name" value="AP_NUCLEASE_F2_2"/>
    <property type="match status" value="1"/>
</dbReference>
<dbReference type="PROSITE" id="PS00731">
    <property type="entry name" value="AP_NUCLEASE_F2_3"/>
    <property type="match status" value="1"/>
</dbReference>
<dbReference type="PROSITE" id="PS51432">
    <property type="entry name" value="AP_NUCLEASE_F2_4"/>
    <property type="match status" value="1"/>
</dbReference>
<protein>
    <recommendedName>
        <fullName evidence="1">Probable endonuclease 4</fullName>
        <ecNumber evidence="1">3.1.21.2</ecNumber>
    </recommendedName>
    <alternativeName>
        <fullName evidence="1">Endodeoxyribonuclease IV</fullName>
    </alternativeName>
    <alternativeName>
        <fullName evidence="1">Endonuclease IV</fullName>
    </alternativeName>
</protein>
<evidence type="ECO:0000255" key="1">
    <source>
        <dbReference type="HAMAP-Rule" id="MF_00152"/>
    </source>
</evidence>
<reference key="1">
    <citation type="journal article" date="2003" name="Science">
        <title>Genome of Geobacter sulfurreducens: metal reduction in subsurface environments.</title>
        <authorList>
            <person name="Methe B.A."/>
            <person name="Nelson K.E."/>
            <person name="Eisen J.A."/>
            <person name="Paulsen I.T."/>
            <person name="Nelson W.C."/>
            <person name="Heidelberg J.F."/>
            <person name="Wu D."/>
            <person name="Wu M."/>
            <person name="Ward N.L."/>
            <person name="Beanan M.J."/>
            <person name="Dodson R.J."/>
            <person name="Madupu R."/>
            <person name="Brinkac L.M."/>
            <person name="Daugherty S.C."/>
            <person name="DeBoy R.T."/>
            <person name="Durkin A.S."/>
            <person name="Gwinn M.L."/>
            <person name="Kolonay J.F."/>
            <person name="Sullivan S.A."/>
            <person name="Haft D.H."/>
            <person name="Selengut J."/>
            <person name="Davidsen T.M."/>
            <person name="Zafar N."/>
            <person name="White O."/>
            <person name="Tran B."/>
            <person name="Romero C."/>
            <person name="Forberger H.A."/>
            <person name="Weidman J.F."/>
            <person name="Khouri H.M."/>
            <person name="Feldblyum T.V."/>
            <person name="Utterback T.R."/>
            <person name="Van Aken S.E."/>
            <person name="Lovley D.R."/>
            <person name="Fraser C.M."/>
        </authorList>
    </citation>
    <scope>NUCLEOTIDE SEQUENCE [LARGE SCALE GENOMIC DNA]</scope>
    <source>
        <strain>ATCC 51573 / DSM 12127 / PCA</strain>
    </source>
</reference>
<gene>
    <name evidence="1" type="primary">nfo</name>
    <name type="ordered locus">GSU0529</name>
</gene>
<organism>
    <name type="scientific">Geobacter sulfurreducens (strain ATCC 51573 / DSM 12127 / PCA)</name>
    <dbReference type="NCBI Taxonomy" id="243231"/>
    <lineage>
        <taxon>Bacteria</taxon>
        <taxon>Pseudomonadati</taxon>
        <taxon>Thermodesulfobacteriota</taxon>
        <taxon>Desulfuromonadia</taxon>
        <taxon>Geobacterales</taxon>
        <taxon>Geobacteraceae</taxon>
        <taxon>Geobacter</taxon>
    </lineage>
</organism>